<organismHost>
    <name type="scientific">Capsicum annuum</name>
    <name type="common">Capsicum pepper</name>
    <dbReference type="NCBI Taxonomy" id="4072"/>
</organismHost>
<organismHost>
    <name type="scientific">Cynanchum acutum</name>
    <dbReference type="NCBI Taxonomy" id="185024"/>
</organismHost>
<organismHost>
    <name type="scientific">Malva parviflora</name>
    <name type="common">Little mallow</name>
    <name type="synonym">Cheeseweed mallow</name>
    <dbReference type="NCBI Taxonomy" id="145753"/>
</organismHost>
<organismHost>
    <name type="scientific">Sinapis arvensis</name>
    <dbReference type="NCBI Taxonomy" id="29728"/>
</organismHost>
<organismHost>
    <name type="scientific">Solanum lycopersicum</name>
    <name type="common">Tomato</name>
    <name type="synonym">Lycopersicon esculentum</name>
    <dbReference type="NCBI Taxonomy" id="4081"/>
</organismHost>
<organismHost>
    <name type="scientific">Solanum nigrum</name>
    <name type="common">Black nightshade</name>
    <dbReference type="NCBI Taxonomy" id="4112"/>
</organismHost>
<accession>P27257</accession>
<feature type="chain" id="PRO_0000222197" description="Capsid protein">
    <location>
        <begin position="1"/>
        <end position="257"/>
    </location>
</feature>
<organism>
    <name type="scientific">Tomato yellow leaf curl Sardinia virus</name>
    <name type="common">TYLCSV</name>
    <dbReference type="NCBI Taxonomy" id="123735"/>
    <lineage>
        <taxon>Viruses</taxon>
        <taxon>Monodnaviria</taxon>
        <taxon>Shotokuvirae</taxon>
        <taxon>Cressdnaviricota</taxon>
        <taxon>Repensiviricetes</taxon>
        <taxon>Geplafuvirales</taxon>
        <taxon>Geminiviridae</taxon>
        <taxon>Begomovirus</taxon>
    </lineage>
</organism>
<reference key="1">
    <citation type="journal article" date="1991" name="Nucleic Acids Res.">
        <title>Tomato yellow leaf curl virus from Sardinia is a whitefly-transmitted monopartite geminivirus.</title>
        <authorList>
            <person name="Kheyr-Pour A."/>
            <person name="Bendahmane M."/>
            <person name="Matzeit V."/>
            <person name="Accotto G.P."/>
            <person name="Crespi S."/>
            <person name="Gronenborn B."/>
        </authorList>
    </citation>
    <scope>NUCLEOTIDE SEQUENCE [GENOMIC DNA]</scope>
</reference>
<reference key="2">
    <citation type="submission" date="1998-12" db="EMBL/GenBank/DDBJ databases">
        <authorList>
            <person name="Gronenborn B."/>
        </authorList>
    </citation>
    <scope>SEQUENCE REVISION TO 131-133 AND 160-164</scope>
</reference>
<comment type="function">
    <text>Encapsidates the viral DNA into characteristic twinned ('geminate') particles. Plays a role in protection of the genome from degradation, virus acquisition and transmission by insect vectors, infectivity, and systemic movement.</text>
</comment>
<comment type="subcellular location">
    <subcellularLocation>
        <location evidence="1">Virion</location>
    </subcellularLocation>
</comment>
<comment type="similarity">
    <text evidence="1">Belongs to the geminiviridae capsid protein family.</text>
</comment>
<proteinExistence type="inferred from homology"/>
<sequence length="257" mass="29982">MPKRTGDILISTPVSKVRRRLNFDSPYTSRAAAPTVQGIKRRSWTYRPMYRKPRMYRMYRSPDVPPGCEGPCKVQSYEQRDDVKHTGVVRCVSDVTRGSGITHRVGKRFCIKSIYILGKIWMDENIKKQNHTNQVMFFLVRDRRPYGTSPMDFGQVFNMFDNEPSTATVKNDLRDRYQVMRKFHATVVGGPSGMKEQCLLKRFFKINTHVVYNHQEQAKYENHTENALLLYMACTHASNPVYATLKIRIYFYDAVTN</sequence>
<dbReference type="EMBL" id="X61153">
    <property type="protein sequence ID" value="CAA43467.1"/>
    <property type="molecule type" value="Genomic_DNA"/>
</dbReference>
<dbReference type="PIR" id="S22589">
    <property type="entry name" value="S22589"/>
</dbReference>
<dbReference type="SMR" id="P27257"/>
<dbReference type="KEGG" id="vg:944423"/>
<dbReference type="OrthoDB" id="5720at10239"/>
<dbReference type="Proteomes" id="UP000002323">
    <property type="component" value="Genome"/>
</dbReference>
<dbReference type="GO" id="GO:0043657">
    <property type="term" value="C:host cell"/>
    <property type="evidence" value="ECO:0007669"/>
    <property type="project" value="GOC"/>
</dbReference>
<dbReference type="GO" id="GO:0039615">
    <property type="term" value="C:T=1 icosahedral viral capsid"/>
    <property type="evidence" value="ECO:0007669"/>
    <property type="project" value="UniProtKB-KW"/>
</dbReference>
<dbReference type="GO" id="GO:0005198">
    <property type="term" value="F:structural molecule activity"/>
    <property type="evidence" value="ECO:0007669"/>
    <property type="project" value="InterPro"/>
</dbReference>
<dbReference type="GO" id="GO:0046718">
    <property type="term" value="P:symbiont entry into host cell"/>
    <property type="evidence" value="ECO:0007669"/>
    <property type="project" value="UniProtKB-KW"/>
</dbReference>
<dbReference type="GO" id="GO:0075732">
    <property type="term" value="P:viral penetration into host nucleus"/>
    <property type="evidence" value="ECO:0007669"/>
    <property type="project" value="UniProtKB-KW"/>
</dbReference>
<dbReference type="Gene3D" id="2.60.120.20">
    <property type="match status" value="1"/>
</dbReference>
<dbReference type="InterPro" id="IPR000650">
    <property type="entry name" value="Gem_coat_AR1"/>
</dbReference>
<dbReference type="InterPro" id="IPR000263">
    <property type="entry name" value="GV_A/BR1_coat"/>
</dbReference>
<dbReference type="InterPro" id="IPR029053">
    <property type="entry name" value="Viral_coat"/>
</dbReference>
<dbReference type="Pfam" id="PF00844">
    <property type="entry name" value="Gemini_coat"/>
    <property type="match status" value="1"/>
</dbReference>
<dbReference type="PRINTS" id="PR00224">
    <property type="entry name" value="GEMCOATAR1"/>
</dbReference>
<dbReference type="PRINTS" id="PR00223">
    <property type="entry name" value="GEMCOATARBR1"/>
</dbReference>
<protein>
    <recommendedName>
        <fullName>Capsid protein</fullName>
    </recommendedName>
    <alternativeName>
        <fullName>Coat protein</fullName>
        <shortName>CP</shortName>
    </alternativeName>
</protein>
<name>CAPSD_TYCSV</name>
<keyword id="KW-0167">Capsid protein</keyword>
<keyword id="KW-1185">Reference proteome</keyword>
<keyword id="KW-1140">T=1 icosahedral capsid protein</keyword>
<keyword id="KW-1163">Viral penetration into host nucleus</keyword>
<keyword id="KW-0946">Virion</keyword>
<keyword id="KW-1160">Virus entry into host cell</keyword>
<evidence type="ECO:0000305" key="1"/>
<gene>
    <name type="ORF">V2</name>
</gene>